<keyword id="KW-0963">Cytoplasm</keyword>
<keyword id="KW-1017">Isopeptide bond</keyword>
<keyword id="KW-0539">Nucleus</keyword>
<keyword id="KW-1185">Reference proteome</keyword>
<keyword id="KW-0833">Ubl conjugation pathway</keyword>
<reference key="1">
    <citation type="journal article" date="2003" name="J. Biol. Chem.">
        <title>The small ubiquitin-like modifier (SUMO) protein modification system in Arabidopsis. Accumulation of SUMO1 and -2 conjugates is increased by stress.</title>
        <authorList>
            <person name="Kurepa J."/>
            <person name="Walker J.M."/>
            <person name="Smalle J."/>
            <person name="Gosink M.M."/>
            <person name="Davis S.J."/>
            <person name="Durham T.L."/>
            <person name="Sung D.Y."/>
            <person name="Vierstra R.D."/>
        </authorList>
    </citation>
    <scope>NUCLEOTIDE SEQUENCE [MRNA]</scope>
    <source>
        <strain>cv. Columbia</strain>
    </source>
</reference>
<reference key="2">
    <citation type="journal article" date="1998" name="DNA Res.">
        <title>Structural analysis of Arabidopsis thaliana chromosome 5. IV. Sequence features of the regions of 1,456,315 bp covered by nineteen physically assigned P1 and TAC clones.</title>
        <authorList>
            <person name="Sato S."/>
            <person name="Kaneko T."/>
            <person name="Kotani H."/>
            <person name="Nakamura Y."/>
            <person name="Asamizu E."/>
            <person name="Miyajima N."/>
            <person name="Tabata S."/>
        </authorList>
    </citation>
    <scope>NUCLEOTIDE SEQUENCE [LARGE SCALE GENOMIC DNA]</scope>
    <source>
        <strain>cv. Columbia</strain>
    </source>
</reference>
<reference key="3">
    <citation type="journal article" date="2017" name="Plant J.">
        <title>Araport11: a complete reannotation of the Arabidopsis thaliana reference genome.</title>
        <authorList>
            <person name="Cheng C.Y."/>
            <person name="Krishnakumar V."/>
            <person name="Chan A.P."/>
            <person name="Thibaud-Nissen F."/>
            <person name="Schobel S."/>
            <person name="Town C.D."/>
        </authorList>
    </citation>
    <scope>GENOME REANNOTATION</scope>
    <source>
        <strain>cv. Columbia</strain>
    </source>
</reference>
<reference key="4">
    <citation type="submission" date="2006-03" db="EMBL/GenBank/DDBJ databases">
        <title>Arabidopsis ORF clones.</title>
        <authorList>
            <person name="Shinn P."/>
            <person name="Chen H."/>
            <person name="Kim C.J."/>
            <person name="Ecker J.R."/>
        </authorList>
    </citation>
    <scope>NUCLEOTIDE SEQUENCE [LARGE SCALE MRNA]</scope>
    <source>
        <strain>cv. Columbia</strain>
    </source>
</reference>
<reference key="5">
    <citation type="journal article" date="2015" name="Cell Host Microbe">
        <title>Posttranslational modifications of the master transcriptional regulator NPR1 enable dynamic but tight control of plant immune responses.</title>
        <authorList>
            <person name="Saleh A."/>
            <person name="Withers J."/>
            <person name="Mohan R."/>
            <person name="Marques J."/>
            <person name="Gu Y."/>
            <person name="Yan S."/>
            <person name="Zavaliev R."/>
            <person name="Nomoto M."/>
            <person name="Tada Y."/>
            <person name="Dong X."/>
        </authorList>
    </citation>
    <scope>FUNCTION</scope>
    <scope>INTERACTION WITH NPR1</scope>
</reference>
<accession>Q9FLP5</accession>
<name>SUMO3_ARATH</name>
<evidence type="ECO:0000250" key="1"/>
<evidence type="ECO:0000250" key="2">
    <source>
        <dbReference type="UniProtKB" id="P55852"/>
    </source>
</evidence>
<evidence type="ECO:0000250" key="3">
    <source>
        <dbReference type="UniProtKB" id="Q9FLP6"/>
    </source>
</evidence>
<evidence type="ECO:0000255" key="4">
    <source>
        <dbReference type="PROSITE-ProRule" id="PRU00214"/>
    </source>
</evidence>
<evidence type="ECO:0000269" key="5">
    <source>
    </source>
</evidence>
<evidence type="ECO:0000303" key="6">
    <source>
    </source>
</evidence>
<evidence type="ECO:0000305" key="7"/>
<evidence type="ECO:0000312" key="8">
    <source>
        <dbReference type="Araport" id="AT5G55170"/>
    </source>
</evidence>
<evidence type="ECO:0000312" key="9">
    <source>
        <dbReference type="EMBL" id="BAB08586.1"/>
    </source>
</evidence>
<organism>
    <name type="scientific">Arabidopsis thaliana</name>
    <name type="common">Mouse-ear cress</name>
    <dbReference type="NCBI Taxonomy" id="3702"/>
    <lineage>
        <taxon>Eukaryota</taxon>
        <taxon>Viridiplantae</taxon>
        <taxon>Streptophyta</taxon>
        <taxon>Embryophyta</taxon>
        <taxon>Tracheophyta</taxon>
        <taxon>Spermatophyta</taxon>
        <taxon>Magnoliopsida</taxon>
        <taxon>eudicotyledons</taxon>
        <taxon>Gunneridae</taxon>
        <taxon>Pentapetalae</taxon>
        <taxon>rosids</taxon>
        <taxon>malvids</taxon>
        <taxon>Brassicales</taxon>
        <taxon>Brassicaceae</taxon>
        <taxon>Camelineae</taxon>
        <taxon>Arabidopsis</taxon>
    </lineage>
</organism>
<sequence length="111" mass="12580">MSNPQDDKPIDQEQEAHVILKVKSQDGDEVLFKNKKSAPLKKLMYVYCDRRGLKLDAFAFIFNGARIGGLETPDELDMEDGDVIDACRAMSGGLRANQRQWSYMLFDHNGL</sequence>
<feature type="chain" id="PRO_0000397034" description="Small ubiquitin-related modifier 3">
    <location>
        <begin position="1"/>
        <end position="111"/>
    </location>
</feature>
<feature type="domain" description="Ubiquitin-like" evidence="4">
    <location>
        <begin position="16"/>
        <end position="93"/>
    </location>
</feature>
<feature type="cross-link" description="Glycyl lysine isopeptide (Gly-Lys) (interchain with K-? in acceptor proteins)" evidence="4">
    <location>
        <position position="93"/>
    </location>
</feature>
<protein>
    <recommendedName>
        <fullName evidence="6">Small ubiquitin-related modifier 3</fullName>
        <shortName evidence="6">AtSUMO3</shortName>
    </recommendedName>
</protein>
<comment type="function">
    <text evidence="3 5">Ubiquitin-like protein which can be covalently attached to target lysines as a monomer (By similarity). Does not seem to be involved in protein degradation and may function as an antagonist of ubiquitin in the degradation process (By similarity). Promotes NPR1 sumoylation to activate defense gene expression and regulate its degradation (PubMed:26269953).</text>
</comment>
<comment type="subunit">
    <text evidence="1 2 5">Interacts with SAE2, SCE1, SIZ1 and MMS21 (By similarity). Covalently attached to a number of proteins (By similarity). Interacts with NPR1; this interaction promotes NPR1 phosphorylation and triggers its sumoylation and subsequent degradation (PubMed:26269953).</text>
</comment>
<comment type="interaction">
    <interactant intactId="EBI-25512645">
        <id>Q9FLP5</id>
    </interactant>
    <interactant intactId="EBI-4446992">
        <id>O81313</id>
        <label>IND</label>
    </interactant>
    <organismsDiffer>false</organismsDiffer>
    <experiments>3</experiments>
</comment>
<comment type="interaction">
    <interactant intactId="EBI-25512645">
        <id>Q9FLP5</id>
    </interactant>
    <interactant intactId="EBI-15192297">
        <id>Q9LQF0</id>
        <label>TCP23</label>
    </interactant>
    <organismsDiffer>false</organismsDiffer>
    <experiments>3</experiments>
</comment>
<comment type="interaction">
    <interactant intactId="EBI-25512645">
        <id>Q9FLP5</id>
    </interactant>
    <interactant intactId="EBI-15193683">
        <id>Q5CCK4</id>
        <label>VAL2</label>
    </interactant>
    <organismsDiffer>false</organismsDiffer>
    <experiments>3</experiments>
</comment>
<comment type="subcellular location">
    <subcellularLocation>
        <location evidence="3">Nucleus</location>
    </subcellularLocation>
    <subcellularLocation>
        <location evidence="3">Cytoplasm</location>
    </subcellularLocation>
</comment>
<comment type="miscellaneous">
    <text>Stress conditions rapidly and substantially elevates the amount of SUMO1 and SUMO2 conjugates with a concomitant reduction in the amount of free SUMO proteins. The SUMO conjugation system plays an important function in stress protection and/or repair.</text>
</comment>
<comment type="similarity">
    <text evidence="7">Belongs to the ubiquitin family. SUMO subfamily.</text>
</comment>
<gene>
    <name evidence="6" type="primary">SUMO3</name>
    <name type="synonym">SUM3</name>
    <name evidence="8" type="ordered locus">At5g55170</name>
    <name evidence="9" type="ORF">MCO15.12</name>
</gene>
<dbReference type="EMBL" id="AB010071">
    <property type="protein sequence ID" value="BAB08586.1"/>
    <property type="molecule type" value="Genomic_DNA"/>
</dbReference>
<dbReference type="EMBL" id="CP002688">
    <property type="protein sequence ID" value="AED96595.1"/>
    <property type="molecule type" value="Genomic_DNA"/>
</dbReference>
<dbReference type="EMBL" id="AF510521">
    <property type="protein sequence ID" value="AAN03847.1"/>
    <property type="molecule type" value="mRNA"/>
</dbReference>
<dbReference type="EMBL" id="BT024755">
    <property type="protein sequence ID" value="ABD59093.1"/>
    <property type="molecule type" value="mRNA"/>
</dbReference>
<dbReference type="RefSeq" id="NP_200328.1">
    <property type="nucleotide sequence ID" value="NM_124899.4"/>
</dbReference>
<dbReference type="SMR" id="Q9FLP5"/>
<dbReference type="BioGRID" id="20854">
    <property type="interactions" value="129"/>
</dbReference>
<dbReference type="FunCoup" id="Q9FLP5">
    <property type="interactions" value="410"/>
</dbReference>
<dbReference type="IntAct" id="Q9FLP5">
    <property type="interactions" value="3"/>
</dbReference>
<dbReference type="STRING" id="3702.Q9FLP5"/>
<dbReference type="PaxDb" id="3702-AT5G55170.1"/>
<dbReference type="EnsemblPlants" id="AT5G55170.1">
    <property type="protein sequence ID" value="AT5G55170.1"/>
    <property type="gene ID" value="AT5G55170"/>
</dbReference>
<dbReference type="GeneID" id="835610"/>
<dbReference type="Gramene" id="AT5G55170.1">
    <property type="protein sequence ID" value="AT5G55170.1"/>
    <property type="gene ID" value="AT5G55170"/>
</dbReference>
<dbReference type="KEGG" id="ath:AT5G55170"/>
<dbReference type="Araport" id="AT5G55170"/>
<dbReference type="TAIR" id="AT5G55170">
    <property type="gene designation" value="SUMO3"/>
</dbReference>
<dbReference type="eggNOG" id="KOG1769">
    <property type="taxonomic scope" value="Eukaryota"/>
</dbReference>
<dbReference type="HOGENOM" id="CLU_148322_4_0_1"/>
<dbReference type="InParanoid" id="Q9FLP5"/>
<dbReference type="OMA" id="KLMYAYC"/>
<dbReference type="PhylomeDB" id="Q9FLP5"/>
<dbReference type="PRO" id="PR:Q9FLP5"/>
<dbReference type="Proteomes" id="UP000006548">
    <property type="component" value="Chromosome 5"/>
</dbReference>
<dbReference type="ExpressionAtlas" id="Q9FLP5">
    <property type="expression patterns" value="baseline and differential"/>
</dbReference>
<dbReference type="GO" id="GO:0005737">
    <property type="term" value="C:cytoplasm"/>
    <property type="evidence" value="ECO:0007669"/>
    <property type="project" value="UniProtKB-SubCell"/>
</dbReference>
<dbReference type="GO" id="GO:0005634">
    <property type="term" value="C:nucleus"/>
    <property type="evidence" value="ECO:0007669"/>
    <property type="project" value="UniProtKB-SubCell"/>
</dbReference>
<dbReference type="GO" id="GO:0031386">
    <property type="term" value="F:protein tag activity"/>
    <property type="evidence" value="ECO:0000314"/>
    <property type="project" value="TAIR"/>
</dbReference>
<dbReference type="GO" id="GO:0016925">
    <property type="term" value="P:protein sumoylation"/>
    <property type="evidence" value="ECO:0000314"/>
    <property type="project" value="TAIR"/>
</dbReference>
<dbReference type="FunFam" id="3.10.20.90:FF:000407">
    <property type="entry name" value="Small ubiquitin-related modifier 2 isoform A"/>
    <property type="match status" value="1"/>
</dbReference>
<dbReference type="Gene3D" id="3.10.20.90">
    <property type="entry name" value="Phosphatidylinositol 3-kinase Catalytic Subunit, Chain A, domain 1"/>
    <property type="match status" value="1"/>
</dbReference>
<dbReference type="InterPro" id="IPR022617">
    <property type="entry name" value="Rad60/SUMO-like_dom"/>
</dbReference>
<dbReference type="InterPro" id="IPR000626">
    <property type="entry name" value="Ubiquitin-like_dom"/>
</dbReference>
<dbReference type="InterPro" id="IPR029071">
    <property type="entry name" value="Ubiquitin-like_domsf"/>
</dbReference>
<dbReference type="PANTHER" id="PTHR10562">
    <property type="entry name" value="SMALL UBIQUITIN-RELATED MODIFIER"/>
    <property type="match status" value="1"/>
</dbReference>
<dbReference type="Pfam" id="PF11976">
    <property type="entry name" value="Rad60-SLD"/>
    <property type="match status" value="1"/>
</dbReference>
<dbReference type="SUPFAM" id="SSF54236">
    <property type="entry name" value="Ubiquitin-like"/>
    <property type="match status" value="1"/>
</dbReference>
<dbReference type="PROSITE" id="PS50053">
    <property type="entry name" value="UBIQUITIN_2"/>
    <property type="match status" value="1"/>
</dbReference>
<proteinExistence type="evidence at protein level"/>